<keyword id="KW-0216">Detoxification</keyword>
<keyword id="KW-0274">FAD</keyword>
<keyword id="KW-0285">Flavoprotein</keyword>
<keyword id="KW-0349">Heme</keyword>
<keyword id="KW-0408">Iron</keyword>
<keyword id="KW-0479">Metal-binding</keyword>
<keyword id="KW-0520">NAD</keyword>
<keyword id="KW-0521">NADP</keyword>
<keyword id="KW-0560">Oxidoreductase</keyword>
<keyword id="KW-0561">Oxygen transport</keyword>
<keyword id="KW-1185">Reference proteome</keyword>
<keyword id="KW-0813">Transport</keyword>
<gene>
    <name evidence="1" type="primary">hmp</name>
    <name type="synonym">hmpA</name>
    <name type="ordered locus">SF2599</name>
    <name type="ordered locus">S2771</name>
</gene>
<evidence type="ECO:0000255" key="1">
    <source>
        <dbReference type="HAMAP-Rule" id="MF_01252"/>
    </source>
</evidence>
<evidence type="ECO:0000255" key="2">
    <source>
        <dbReference type="PROSITE-ProRule" id="PRU00238"/>
    </source>
</evidence>
<dbReference type="EC" id="1.14.12.17" evidence="1"/>
<dbReference type="EMBL" id="AE005674">
    <property type="protein sequence ID" value="AAN44096.1"/>
    <property type="molecule type" value="Genomic_DNA"/>
</dbReference>
<dbReference type="EMBL" id="AE014073">
    <property type="protein sequence ID" value="AAP17920.1"/>
    <property type="molecule type" value="Genomic_DNA"/>
</dbReference>
<dbReference type="RefSeq" id="NP_708389.1">
    <property type="nucleotide sequence ID" value="NC_004337.2"/>
</dbReference>
<dbReference type="RefSeq" id="WP_000883129.1">
    <property type="nucleotide sequence ID" value="NZ_WPGW01000021.1"/>
</dbReference>
<dbReference type="SMR" id="Q7C0F9"/>
<dbReference type="STRING" id="198214.SF2599"/>
<dbReference type="PaxDb" id="198214-SF2599"/>
<dbReference type="GeneID" id="1026953"/>
<dbReference type="KEGG" id="sfl:SF2599"/>
<dbReference type="KEGG" id="sfx:S2771"/>
<dbReference type="PATRIC" id="fig|198214.7.peg.3104"/>
<dbReference type="HOGENOM" id="CLU_003827_12_0_6"/>
<dbReference type="Proteomes" id="UP000001006">
    <property type="component" value="Chromosome"/>
</dbReference>
<dbReference type="Proteomes" id="UP000002673">
    <property type="component" value="Chromosome"/>
</dbReference>
<dbReference type="GO" id="GO:0071949">
    <property type="term" value="F:FAD binding"/>
    <property type="evidence" value="ECO:0007669"/>
    <property type="project" value="InterPro"/>
</dbReference>
<dbReference type="GO" id="GO:0020037">
    <property type="term" value="F:heme binding"/>
    <property type="evidence" value="ECO:0007669"/>
    <property type="project" value="InterPro"/>
</dbReference>
<dbReference type="GO" id="GO:0046872">
    <property type="term" value="F:metal ion binding"/>
    <property type="evidence" value="ECO:0007669"/>
    <property type="project" value="UniProtKB-KW"/>
</dbReference>
<dbReference type="GO" id="GO:0008941">
    <property type="term" value="F:nitric oxide dioxygenase NAD(P)H activity"/>
    <property type="evidence" value="ECO:0007669"/>
    <property type="project" value="UniProtKB-UniRule"/>
</dbReference>
<dbReference type="GO" id="GO:0019825">
    <property type="term" value="F:oxygen binding"/>
    <property type="evidence" value="ECO:0007669"/>
    <property type="project" value="InterPro"/>
</dbReference>
<dbReference type="GO" id="GO:0005344">
    <property type="term" value="F:oxygen carrier activity"/>
    <property type="evidence" value="ECO:0007669"/>
    <property type="project" value="UniProtKB-UniRule"/>
</dbReference>
<dbReference type="GO" id="GO:0071500">
    <property type="term" value="P:cellular response to nitrosative stress"/>
    <property type="evidence" value="ECO:0007669"/>
    <property type="project" value="TreeGrafter"/>
</dbReference>
<dbReference type="GO" id="GO:0046210">
    <property type="term" value="P:nitric oxide catabolic process"/>
    <property type="evidence" value="ECO:0007669"/>
    <property type="project" value="TreeGrafter"/>
</dbReference>
<dbReference type="GO" id="GO:0009636">
    <property type="term" value="P:response to toxic substance"/>
    <property type="evidence" value="ECO:0007669"/>
    <property type="project" value="UniProtKB-KW"/>
</dbReference>
<dbReference type="CDD" id="cd06184">
    <property type="entry name" value="flavohem_like_fad_nad_binding"/>
    <property type="match status" value="1"/>
</dbReference>
<dbReference type="CDD" id="cd14776">
    <property type="entry name" value="HmpEc-globin-like"/>
    <property type="match status" value="1"/>
</dbReference>
<dbReference type="FunFam" id="1.10.490.10:FF:000003">
    <property type="entry name" value="Flavohemoprotein"/>
    <property type="match status" value="1"/>
</dbReference>
<dbReference type="FunFam" id="2.40.30.10:FF:000034">
    <property type="entry name" value="Flavohemoprotein"/>
    <property type="match status" value="1"/>
</dbReference>
<dbReference type="FunFam" id="3.40.50.80:FF:000010">
    <property type="entry name" value="Flavohemoprotein"/>
    <property type="match status" value="1"/>
</dbReference>
<dbReference type="Gene3D" id="1.10.490.10">
    <property type="entry name" value="Globins"/>
    <property type="match status" value="1"/>
</dbReference>
<dbReference type="Gene3D" id="3.40.50.80">
    <property type="entry name" value="Nucleotide-binding domain of ferredoxin-NADP reductase (FNR) module"/>
    <property type="match status" value="1"/>
</dbReference>
<dbReference type="Gene3D" id="2.40.30.10">
    <property type="entry name" value="Translation factors"/>
    <property type="match status" value="1"/>
</dbReference>
<dbReference type="HAMAP" id="MF_01252">
    <property type="entry name" value="Hmp"/>
    <property type="match status" value="1"/>
</dbReference>
<dbReference type="InterPro" id="IPR008333">
    <property type="entry name" value="Cbr1-like_FAD-bd_dom"/>
</dbReference>
<dbReference type="InterPro" id="IPR017927">
    <property type="entry name" value="FAD-bd_FR_type"/>
</dbReference>
<dbReference type="InterPro" id="IPR039261">
    <property type="entry name" value="FNR_nucleotide-bd"/>
</dbReference>
<dbReference type="InterPro" id="IPR000971">
    <property type="entry name" value="Globin"/>
</dbReference>
<dbReference type="InterPro" id="IPR009050">
    <property type="entry name" value="Globin-like_sf"/>
</dbReference>
<dbReference type="InterPro" id="IPR012292">
    <property type="entry name" value="Globin/Proto"/>
</dbReference>
<dbReference type="InterPro" id="IPR023950">
    <property type="entry name" value="Hmp"/>
</dbReference>
<dbReference type="InterPro" id="IPR001433">
    <property type="entry name" value="OxRdtase_FAD/NAD-bd"/>
</dbReference>
<dbReference type="InterPro" id="IPR017938">
    <property type="entry name" value="Riboflavin_synthase-like_b-brl"/>
</dbReference>
<dbReference type="NCBIfam" id="NF009805">
    <property type="entry name" value="PRK13289.1"/>
    <property type="match status" value="1"/>
</dbReference>
<dbReference type="PANTHER" id="PTHR43396">
    <property type="entry name" value="FLAVOHEMOPROTEIN"/>
    <property type="match status" value="1"/>
</dbReference>
<dbReference type="PANTHER" id="PTHR43396:SF3">
    <property type="entry name" value="FLAVOHEMOPROTEIN"/>
    <property type="match status" value="1"/>
</dbReference>
<dbReference type="Pfam" id="PF00970">
    <property type="entry name" value="FAD_binding_6"/>
    <property type="match status" value="1"/>
</dbReference>
<dbReference type="Pfam" id="PF00042">
    <property type="entry name" value="Globin"/>
    <property type="match status" value="1"/>
</dbReference>
<dbReference type="Pfam" id="PF00175">
    <property type="entry name" value="NAD_binding_1"/>
    <property type="match status" value="1"/>
</dbReference>
<dbReference type="PRINTS" id="PR00410">
    <property type="entry name" value="PHEHYDRXLASE"/>
</dbReference>
<dbReference type="SUPFAM" id="SSF52343">
    <property type="entry name" value="Ferredoxin reductase-like, C-terminal NADP-linked domain"/>
    <property type="match status" value="1"/>
</dbReference>
<dbReference type="SUPFAM" id="SSF46458">
    <property type="entry name" value="Globin-like"/>
    <property type="match status" value="1"/>
</dbReference>
<dbReference type="SUPFAM" id="SSF63380">
    <property type="entry name" value="Riboflavin synthase domain-like"/>
    <property type="match status" value="1"/>
</dbReference>
<dbReference type="PROSITE" id="PS51384">
    <property type="entry name" value="FAD_FR"/>
    <property type="match status" value="1"/>
</dbReference>
<dbReference type="PROSITE" id="PS01033">
    <property type="entry name" value="GLOBIN"/>
    <property type="match status" value="1"/>
</dbReference>
<protein>
    <recommendedName>
        <fullName evidence="1">Flavohemoprotein</fullName>
    </recommendedName>
    <alternativeName>
        <fullName evidence="1">Flavohemoglobin</fullName>
    </alternativeName>
    <alternativeName>
        <fullName evidence="1">Hemoglobin-like protein</fullName>
    </alternativeName>
    <alternativeName>
        <fullName evidence="1">Nitric oxide dioxygenase</fullName>
        <shortName evidence="1">NO oxygenase</shortName>
        <shortName evidence="1">NOD</shortName>
        <ecNumber evidence="1">1.14.12.17</ecNumber>
    </alternativeName>
</protein>
<proteinExistence type="inferred from homology"/>
<reference key="1">
    <citation type="journal article" date="2002" name="Nucleic Acids Res.">
        <title>Genome sequence of Shigella flexneri 2a: insights into pathogenicity through comparison with genomes of Escherichia coli K12 and O157.</title>
        <authorList>
            <person name="Jin Q."/>
            <person name="Yuan Z."/>
            <person name="Xu J."/>
            <person name="Wang Y."/>
            <person name="Shen Y."/>
            <person name="Lu W."/>
            <person name="Wang J."/>
            <person name="Liu H."/>
            <person name="Yang J."/>
            <person name="Yang F."/>
            <person name="Zhang X."/>
            <person name="Zhang J."/>
            <person name="Yang G."/>
            <person name="Wu H."/>
            <person name="Qu D."/>
            <person name="Dong J."/>
            <person name="Sun L."/>
            <person name="Xue Y."/>
            <person name="Zhao A."/>
            <person name="Gao Y."/>
            <person name="Zhu J."/>
            <person name="Kan B."/>
            <person name="Ding K."/>
            <person name="Chen S."/>
            <person name="Cheng H."/>
            <person name="Yao Z."/>
            <person name="He B."/>
            <person name="Chen R."/>
            <person name="Ma D."/>
            <person name="Qiang B."/>
            <person name="Wen Y."/>
            <person name="Hou Y."/>
            <person name="Yu J."/>
        </authorList>
    </citation>
    <scope>NUCLEOTIDE SEQUENCE [LARGE SCALE GENOMIC DNA]</scope>
    <source>
        <strain>301 / Serotype 2a</strain>
    </source>
</reference>
<reference key="2">
    <citation type="journal article" date="2003" name="Infect. Immun.">
        <title>Complete genome sequence and comparative genomics of Shigella flexneri serotype 2a strain 2457T.</title>
        <authorList>
            <person name="Wei J."/>
            <person name="Goldberg M.B."/>
            <person name="Burland V."/>
            <person name="Venkatesan M.M."/>
            <person name="Deng W."/>
            <person name="Fournier G."/>
            <person name="Mayhew G.F."/>
            <person name="Plunkett G. III"/>
            <person name="Rose D.J."/>
            <person name="Darling A."/>
            <person name="Mau B."/>
            <person name="Perna N.T."/>
            <person name="Payne S.M."/>
            <person name="Runyen-Janecky L.J."/>
            <person name="Zhou S."/>
            <person name="Schwartz D.C."/>
            <person name="Blattner F.R."/>
        </authorList>
    </citation>
    <scope>NUCLEOTIDE SEQUENCE [LARGE SCALE GENOMIC DNA]</scope>
    <source>
        <strain>ATCC 700930 / 2457T / Serotype 2a</strain>
    </source>
</reference>
<organism>
    <name type="scientific">Shigella flexneri</name>
    <dbReference type="NCBI Taxonomy" id="623"/>
    <lineage>
        <taxon>Bacteria</taxon>
        <taxon>Pseudomonadati</taxon>
        <taxon>Pseudomonadota</taxon>
        <taxon>Gammaproteobacteria</taxon>
        <taxon>Enterobacterales</taxon>
        <taxon>Enterobacteriaceae</taxon>
        <taxon>Shigella</taxon>
    </lineage>
</organism>
<name>HMP_SHIFL</name>
<feature type="chain" id="PRO_0000052448" description="Flavohemoprotein">
    <location>
        <begin position="1"/>
        <end position="396"/>
    </location>
</feature>
<feature type="domain" description="Globin" evidence="2">
    <location>
        <begin position="1"/>
        <end position="136"/>
    </location>
</feature>
<feature type="domain" description="FAD-binding FR-type" evidence="1">
    <location>
        <begin position="150"/>
        <end position="255"/>
    </location>
</feature>
<feature type="region of interest" description="Reductase">
    <location>
        <begin position="147"/>
        <end position="396"/>
    </location>
</feature>
<feature type="active site" description="Charge relay system" evidence="1">
    <location>
        <position position="95"/>
    </location>
</feature>
<feature type="active site" description="Charge relay system" evidence="1">
    <location>
        <position position="135"/>
    </location>
</feature>
<feature type="binding site" description="proximal binding residue" evidence="1">
    <location>
        <position position="85"/>
    </location>
    <ligand>
        <name>heme b</name>
        <dbReference type="ChEBI" id="CHEBI:60344"/>
    </ligand>
    <ligandPart>
        <name>Fe</name>
        <dbReference type="ChEBI" id="CHEBI:18248"/>
    </ligandPart>
</feature>
<feature type="binding site" evidence="1">
    <location>
        <position position="188"/>
    </location>
    <ligand>
        <name>FAD</name>
        <dbReference type="ChEBI" id="CHEBI:57692"/>
    </ligand>
</feature>
<feature type="binding site" evidence="1">
    <location>
        <begin position="204"/>
        <end position="207"/>
    </location>
    <ligand>
        <name>FAD</name>
        <dbReference type="ChEBI" id="CHEBI:57692"/>
    </ligand>
</feature>
<feature type="binding site" evidence="1">
    <location>
        <begin position="268"/>
        <end position="273"/>
    </location>
    <ligand>
        <name>NADP(+)</name>
        <dbReference type="ChEBI" id="CHEBI:58349"/>
    </ligand>
</feature>
<feature type="binding site" evidence="1">
    <location>
        <begin position="389"/>
        <end position="392"/>
    </location>
    <ligand>
        <name>FAD</name>
        <dbReference type="ChEBI" id="CHEBI:57692"/>
    </ligand>
</feature>
<feature type="site" description="Involved in heme-bound ligand stabilization and O-O bond activation" evidence="1">
    <location>
        <position position="29"/>
    </location>
</feature>
<feature type="site" description="Influences the redox potential of the prosthetic heme and FAD groups" evidence="1">
    <location>
        <position position="84"/>
    </location>
</feature>
<feature type="site" description="Influences the redox potential of the prosthetic heme and FAD groups" evidence="1">
    <location>
        <position position="388"/>
    </location>
</feature>
<accession>Q7C0F9</accession>
<accession>Q83QJ4</accession>
<sequence>MLDAQTIATVKATIPLLVETGPKLTAHFYDRMFTHNPELKEIFNMSNQRNGDQREALFNAIAAYASNIENLPALLPAVEKIAQKHTSFQIKPEQYNIVGEHLLATLDEMFSPGQEVLDAWGKAYGVLANVFINREAEIYNENASKAGGWEGTRDFRIVAKTPRSALITSFELEPVDGGAVAEYRPGQYLGVWLKPEGFPHQEIRQYSLTRKPDGKGYRIAVKREEGGQVSNWLHNHANVGDVVKLVAPAGDFFMAVADDTPVTLISTGVGQTPMLAMLDTLAKAGHTAQVNWFHAAENGEVHAFADEVKELGQSLPRFTAHTWYRQPSEADRAKGQFDSEGLMDLSKLEGAFSDPTMQFYLCGPVGFMQFTAKQLVDLGVKQENIHYECFGPHKVL</sequence>
<comment type="function">
    <text evidence="1">Is involved in NO detoxification in an aerobic process, termed nitric oxide dioxygenase (NOD) reaction that utilizes O(2) and NAD(P)H to convert NO to nitrate, which protects the bacterium from various noxious nitrogen compounds. Therefore, plays a central role in the inducible response to nitrosative stress.</text>
</comment>
<comment type="catalytic activity">
    <reaction evidence="1">
        <text>2 nitric oxide + NADPH + 2 O2 = 2 nitrate + NADP(+) + H(+)</text>
        <dbReference type="Rhea" id="RHEA:19465"/>
        <dbReference type="ChEBI" id="CHEBI:15378"/>
        <dbReference type="ChEBI" id="CHEBI:15379"/>
        <dbReference type="ChEBI" id="CHEBI:16480"/>
        <dbReference type="ChEBI" id="CHEBI:17632"/>
        <dbReference type="ChEBI" id="CHEBI:57783"/>
        <dbReference type="ChEBI" id="CHEBI:58349"/>
        <dbReference type="EC" id="1.14.12.17"/>
    </reaction>
</comment>
<comment type="catalytic activity">
    <reaction evidence="1">
        <text>2 nitric oxide + NADH + 2 O2 = 2 nitrate + NAD(+) + H(+)</text>
        <dbReference type="Rhea" id="RHEA:19469"/>
        <dbReference type="ChEBI" id="CHEBI:15378"/>
        <dbReference type="ChEBI" id="CHEBI:15379"/>
        <dbReference type="ChEBI" id="CHEBI:16480"/>
        <dbReference type="ChEBI" id="CHEBI:17632"/>
        <dbReference type="ChEBI" id="CHEBI:57540"/>
        <dbReference type="ChEBI" id="CHEBI:57945"/>
        <dbReference type="EC" id="1.14.12.17"/>
    </reaction>
</comment>
<comment type="cofactor">
    <cofactor evidence="1">
        <name>heme b</name>
        <dbReference type="ChEBI" id="CHEBI:60344"/>
    </cofactor>
    <text evidence="1">Binds 1 heme b (iron(II)-protoporphyrin IX) group per subunit.</text>
</comment>
<comment type="cofactor">
    <cofactor evidence="1">
        <name>FAD</name>
        <dbReference type="ChEBI" id="CHEBI:57692"/>
    </cofactor>
    <text evidence="1">Binds 1 FAD per subunit.</text>
</comment>
<comment type="domain">
    <text>Consists of two distinct domains; an N-terminal heme-containing oxygen-binding domain and a C-terminal reductase domain with binding sites for FAD and NAD(P)H.</text>
</comment>
<comment type="similarity">
    <text evidence="1">Belongs to the globin family. Two-domain flavohemoproteins subfamily.</text>
</comment>
<comment type="similarity">
    <text evidence="1">In the C-terminal section; belongs to the flavoprotein pyridine nucleotide cytochrome reductase family.</text>
</comment>